<name>MQO3_PSEPK</name>
<feature type="chain" id="PRO_0000128734" description="Probable malate:quinone oxidoreductase 3">
    <location>
        <begin position="1"/>
        <end position="539"/>
    </location>
</feature>
<feature type="region of interest" description="Disordered" evidence="2">
    <location>
        <begin position="516"/>
        <end position="539"/>
    </location>
</feature>
<protein>
    <recommendedName>
        <fullName evidence="1">Probable malate:quinone oxidoreductase 3</fullName>
        <ecNumber evidence="1">1.1.5.4</ecNumber>
    </recommendedName>
    <alternativeName>
        <fullName evidence="1">MQO 3</fullName>
    </alternativeName>
    <alternativeName>
        <fullName evidence="1">Malate dehydrogenase [quinone] 3</fullName>
    </alternativeName>
</protein>
<accession>Q88IS4</accession>
<evidence type="ECO:0000255" key="1">
    <source>
        <dbReference type="HAMAP-Rule" id="MF_00212"/>
    </source>
</evidence>
<evidence type="ECO:0000256" key="2">
    <source>
        <dbReference type="SAM" id="MobiDB-lite"/>
    </source>
</evidence>
<organism>
    <name type="scientific">Pseudomonas putida (strain ATCC 47054 / DSM 6125 / CFBP 8728 / NCIMB 11950 / KT2440)</name>
    <dbReference type="NCBI Taxonomy" id="160488"/>
    <lineage>
        <taxon>Bacteria</taxon>
        <taxon>Pseudomonadati</taxon>
        <taxon>Pseudomonadota</taxon>
        <taxon>Gammaproteobacteria</taxon>
        <taxon>Pseudomonadales</taxon>
        <taxon>Pseudomonadaceae</taxon>
        <taxon>Pseudomonas</taxon>
    </lineage>
</organism>
<sequence length="539" mass="59671">MKITIKPKLAMAGLALAIGMLNAQAAETRKVDVLLVGGGIMSSTLAVWLNELEPGWSMEMVERLDKVAEESSNGWNNAGTGHSALAELNYTPEKDGKIDISKAVEINESFQVTRQFLAWQVKQGVLKNPHSFINTTPHMSFVWGDDNIRFLKKRYEALQASPLFKPMQYSEDHEQIRKWVPLMMEGRDPNQKLAVTWTPIGTDVNFGEITRQYVGYLQTRPNFDLKLSSEVQDITRNDDGSWHVEYKNLKNGSKAATDARFLFIGAGGAALPLLQKSGIDEAKNYGGFPVGGSFLVTDNPAIAQRHMAKAYGIAATGAPPMSVPHLDTRVLDGKRLILFGPFATFSTKFLKQGSLLDLLASTSVHNAWPMVRVGVREFDLVQYLIGQVLQSDDDRFEALRTYFPEAKKEDWRLWQAGQRVQIIKKDEALGGVLKLGTEVVTSRDGSIAGLLGASPGASTAAPIMLDVLNKVFKNKVASPEWQAKIKQIIPSYGIRLNDHPDQLEKEWAYTNEVLQLEPPVSPQRPESIRPADSQGVASR</sequence>
<dbReference type="EC" id="1.1.5.4" evidence="1"/>
<dbReference type="EMBL" id="AE015451">
    <property type="protein sequence ID" value="AAN68533.1"/>
    <property type="molecule type" value="Genomic_DNA"/>
</dbReference>
<dbReference type="RefSeq" id="NP_745069.1">
    <property type="nucleotide sequence ID" value="NC_002947.4"/>
</dbReference>
<dbReference type="SMR" id="Q88IS4"/>
<dbReference type="STRING" id="160488.PP_2925"/>
<dbReference type="PaxDb" id="160488-PP_2925"/>
<dbReference type="KEGG" id="ppu:PP_2925"/>
<dbReference type="PATRIC" id="fig|160488.4.peg.3098"/>
<dbReference type="eggNOG" id="COG0579">
    <property type="taxonomic scope" value="Bacteria"/>
</dbReference>
<dbReference type="HOGENOM" id="CLU_028151_0_0_6"/>
<dbReference type="OrthoDB" id="9763983at2"/>
<dbReference type="PhylomeDB" id="Q88IS4"/>
<dbReference type="BioCyc" id="PPUT160488:G1G01-3103-MONOMER"/>
<dbReference type="UniPathway" id="UPA00223">
    <property type="reaction ID" value="UER01008"/>
</dbReference>
<dbReference type="Proteomes" id="UP000000556">
    <property type="component" value="Chromosome"/>
</dbReference>
<dbReference type="GO" id="GO:0047545">
    <property type="term" value="F:2-hydroxyglutarate dehydrogenase activity"/>
    <property type="evidence" value="ECO:0007669"/>
    <property type="project" value="TreeGrafter"/>
</dbReference>
<dbReference type="GO" id="GO:0008924">
    <property type="term" value="F:L-malate dehydrogenase (quinone) activity"/>
    <property type="evidence" value="ECO:0007669"/>
    <property type="project" value="UniProtKB-UniRule"/>
</dbReference>
<dbReference type="GO" id="GO:0006099">
    <property type="term" value="P:tricarboxylic acid cycle"/>
    <property type="evidence" value="ECO:0007669"/>
    <property type="project" value="UniProtKB-UniRule"/>
</dbReference>
<dbReference type="HAMAP" id="MF_00212">
    <property type="entry name" value="MQO"/>
    <property type="match status" value="1"/>
</dbReference>
<dbReference type="InterPro" id="IPR036188">
    <property type="entry name" value="FAD/NAD-bd_sf"/>
</dbReference>
<dbReference type="InterPro" id="IPR006231">
    <property type="entry name" value="MQO"/>
</dbReference>
<dbReference type="NCBIfam" id="TIGR01320">
    <property type="entry name" value="mal_quin_oxido"/>
    <property type="match status" value="1"/>
</dbReference>
<dbReference type="NCBIfam" id="NF003603">
    <property type="entry name" value="PRK05257.1-1"/>
    <property type="match status" value="1"/>
</dbReference>
<dbReference type="NCBIfam" id="NF003605">
    <property type="entry name" value="PRK05257.1-4"/>
    <property type="match status" value="1"/>
</dbReference>
<dbReference type="NCBIfam" id="NF003606">
    <property type="entry name" value="PRK05257.2-1"/>
    <property type="match status" value="1"/>
</dbReference>
<dbReference type="NCBIfam" id="NF003611">
    <property type="entry name" value="PRK05257.3-2"/>
    <property type="match status" value="1"/>
</dbReference>
<dbReference type="NCBIfam" id="NF009875">
    <property type="entry name" value="PRK13339.1"/>
    <property type="match status" value="1"/>
</dbReference>
<dbReference type="PANTHER" id="PTHR43104">
    <property type="entry name" value="L-2-HYDROXYGLUTARATE DEHYDROGENASE, MITOCHONDRIAL"/>
    <property type="match status" value="1"/>
</dbReference>
<dbReference type="PANTHER" id="PTHR43104:SF2">
    <property type="entry name" value="L-2-HYDROXYGLUTARATE DEHYDROGENASE, MITOCHONDRIAL"/>
    <property type="match status" value="1"/>
</dbReference>
<dbReference type="Pfam" id="PF06039">
    <property type="entry name" value="Mqo"/>
    <property type="match status" value="1"/>
</dbReference>
<dbReference type="SUPFAM" id="SSF51905">
    <property type="entry name" value="FAD/NAD(P)-binding domain"/>
    <property type="match status" value="1"/>
</dbReference>
<comment type="catalytic activity">
    <reaction evidence="1">
        <text>(S)-malate + a quinone = a quinol + oxaloacetate</text>
        <dbReference type="Rhea" id="RHEA:46012"/>
        <dbReference type="ChEBI" id="CHEBI:15589"/>
        <dbReference type="ChEBI" id="CHEBI:16452"/>
        <dbReference type="ChEBI" id="CHEBI:24646"/>
        <dbReference type="ChEBI" id="CHEBI:132124"/>
        <dbReference type="EC" id="1.1.5.4"/>
    </reaction>
</comment>
<comment type="cofactor">
    <cofactor evidence="1">
        <name>FAD</name>
        <dbReference type="ChEBI" id="CHEBI:57692"/>
    </cofactor>
</comment>
<comment type="pathway">
    <text evidence="1">Carbohydrate metabolism; tricarboxylic acid cycle; oxaloacetate from (S)-malate (quinone route): step 1/1.</text>
</comment>
<comment type="similarity">
    <text evidence="1">Belongs to the MQO family.</text>
</comment>
<reference key="1">
    <citation type="journal article" date="2002" name="Environ. Microbiol.">
        <title>Complete genome sequence and comparative analysis of the metabolically versatile Pseudomonas putida KT2440.</title>
        <authorList>
            <person name="Nelson K.E."/>
            <person name="Weinel C."/>
            <person name="Paulsen I.T."/>
            <person name="Dodson R.J."/>
            <person name="Hilbert H."/>
            <person name="Martins dos Santos V.A.P."/>
            <person name="Fouts D.E."/>
            <person name="Gill S.R."/>
            <person name="Pop M."/>
            <person name="Holmes M."/>
            <person name="Brinkac L.M."/>
            <person name="Beanan M.J."/>
            <person name="DeBoy R.T."/>
            <person name="Daugherty S.C."/>
            <person name="Kolonay J.F."/>
            <person name="Madupu R."/>
            <person name="Nelson W.C."/>
            <person name="White O."/>
            <person name="Peterson J.D."/>
            <person name="Khouri H.M."/>
            <person name="Hance I."/>
            <person name="Chris Lee P."/>
            <person name="Holtzapple E.K."/>
            <person name="Scanlan D."/>
            <person name="Tran K."/>
            <person name="Moazzez A."/>
            <person name="Utterback T.R."/>
            <person name="Rizzo M."/>
            <person name="Lee K."/>
            <person name="Kosack D."/>
            <person name="Moestl D."/>
            <person name="Wedler H."/>
            <person name="Lauber J."/>
            <person name="Stjepandic D."/>
            <person name="Hoheisel J."/>
            <person name="Straetz M."/>
            <person name="Heim S."/>
            <person name="Kiewitz C."/>
            <person name="Eisen J.A."/>
            <person name="Timmis K.N."/>
            <person name="Duesterhoeft A."/>
            <person name="Tuemmler B."/>
            <person name="Fraser C.M."/>
        </authorList>
    </citation>
    <scope>NUCLEOTIDE SEQUENCE [LARGE SCALE GENOMIC DNA]</scope>
    <source>
        <strain>ATCC 47054 / DSM 6125 / CFBP 8728 / NCIMB 11950 / KT2440</strain>
    </source>
</reference>
<keyword id="KW-0274">FAD</keyword>
<keyword id="KW-0285">Flavoprotein</keyword>
<keyword id="KW-0560">Oxidoreductase</keyword>
<keyword id="KW-1185">Reference proteome</keyword>
<keyword id="KW-0816">Tricarboxylic acid cycle</keyword>
<proteinExistence type="inferred from homology"/>
<gene>
    <name evidence="1" type="primary">mqo3</name>
    <name type="synonym">mqo-3</name>
    <name type="ordered locus">PP_2925</name>
</gene>